<comment type="function">
    <text evidence="1">The ERF2-ERF4 complex is a palmitoyltransferase specific for Ras proteins. Palmitoylates RAS2, which is required for its proper plasma membrane localization (By similarity).</text>
</comment>
<comment type="subunit">
    <text evidence="1">Interacts with ERF2.</text>
</comment>
<comment type="subcellular location">
    <subcellularLocation>
        <location evidence="1">Endoplasmic reticulum membrane</location>
        <topology evidence="1">Peripheral membrane protein</topology>
    </subcellularLocation>
</comment>
<comment type="similarity">
    <text evidence="2">Belongs to the ERF4 family.</text>
</comment>
<feature type="chain" id="PRO_0000213985" description="Ras modification protein ERF4">
    <location>
        <begin position="1"/>
        <end position="258"/>
    </location>
</feature>
<proteinExistence type="inferred from homology"/>
<organism>
    <name type="scientific">Kluyveromyces lactis (strain ATCC 8585 / CBS 2359 / DSM 70799 / NBRC 1267 / NRRL Y-1140 / WM37)</name>
    <name type="common">Yeast</name>
    <name type="synonym">Candida sphaerica</name>
    <dbReference type="NCBI Taxonomy" id="284590"/>
    <lineage>
        <taxon>Eukaryota</taxon>
        <taxon>Fungi</taxon>
        <taxon>Dikarya</taxon>
        <taxon>Ascomycota</taxon>
        <taxon>Saccharomycotina</taxon>
        <taxon>Saccharomycetes</taxon>
        <taxon>Saccharomycetales</taxon>
        <taxon>Saccharomycetaceae</taxon>
        <taxon>Kluyveromyces</taxon>
    </lineage>
</organism>
<accession>Q6CXK4</accession>
<keyword id="KW-0256">Endoplasmic reticulum</keyword>
<keyword id="KW-0472">Membrane</keyword>
<keyword id="KW-1185">Reference proteome</keyword>
<name>ERFD_KLULA</name>
<reference key="1">
    <citation type="journal article" date="2004" name="Nature">
        <title>Genome evolution in yeasts.</title>
        <authorList>
            <person name="Dujon B."/>
            <person name="Sherman D."/>
            <person name="Fischer G."/>
            <person name="Durrens P."/>
            <person name="Casaregola S."/>
            <person name="Lafontaine I."/>
            <person name="de Montigny J."/>
            <person name="Marck C."/>
            <person name="Neuveglise C."/>
            <person name="Talla E."/>
            <person name="Goffard N."/>
            <person name="Frangeul L."/>
            <person name="Aigle M."/>
            <person name="Anthouard V."/>
            <person name="Babour A."/>
            <person name="Barbe V."/>
            <person name="Barnay S."/>
            <person name="Blanchin S."/>
            <person name="Beckerich J.-M."/>
            <person name="Beyne E."/>
            <person name="Bleykasten C."/>
            <person name="Boisrame A."/>
            <person name="Boyer J."/>
            <person name="Cattolico L."/>
            <person name="Confanioleri F."/>
            <person name="de Daruvar A."/>
            <person name="Despons L."/>
            <person name="Fabre E."/>
            <person name="Fairhead C."/>
            <person name="Ferry-Dumazet H."/>
            <person name="Groppi A."/>
            <person name="Hantraye F."/>
            <person name="Hennequin C."/>
            <person name="Jauniaux N."/>
            <person name="Joyet P."/>
            <person name="Kachouri R."/>
            <person name="Kerrest A."/>
            <person name="Koszul R."/>
            <person name="Lemaire M."/>
            <person name="Lesur I."/>
            <person name="Ma L."/>
            <person name="Muller H."/>
            <person name="Nicaud J.-M."/>
            <person name="Nikolski M."/>
            <person name="Oztas S."/>
            <person name="Ozier-Kalogeropoulos O."/>
            <person name="Pellenz S."/>
            <person name="Potier S."/>
            <person name="Richard G.-F."/>
            <person name="Straub M.-L."/>
            <person name="Suleau A."/>
            <person name="Swennen D."/>
            <person name="Tekaia F."/>
            <person name="Wesolowski-Louvel M."/>
            <person name="Westhof E."/>
            <person name="Wirth B."/>
            <person name="Zeniou-Meyer M."/>
            <person name="Zivanovic Y."/>
            <person name="Bolotin-Fukuhara M."/>
            <person name="Thierry A."/>
            <person name="Bouchier C."/>
            <person name="Caudron B."/>
            <person name="Scarpelli C."/>
            <person name="Gaillardin C."/>
            <person name="Weissenbach J."/>
            <person name="Wincker P."/>
            <person name="Souciet J.-L."/>
        </authorList>
    </citation>
    <scope>NUCLEOTIDE SEQUENCE [LARGE SCALE GENOMIC DNA]</scope>
    <source>
        <strain>ATCC 8585 / CBS 2359 / DSM 70799 / NBRC 1267 / NRRL Y-1140 / WM37</strain>
    </source>
</reference>
<protein>
    <recommendedName>
        <fullName>Ras modification protein ERF4</fullName>
    </recommendedName>
</protein>
<gene>
    <name type="primary">ERF4</name>
    <name type="ordered locus">KLLA0A07535g</name>
</gene>
<dbReference type="EMBL" id="CR382121">
    <property type="protein sequence ID" value="CAH02923.1"/>
    <property type="molecule type" value="Genomic_DNA"/>
</dbReference>
<dbReference type="RefSeq" id="XP_451335.1">
    <property type="nucleotide sequence ID" value="XM_451335.1"/>
</dbReference>
<dbReference type="SMR" id="Q6CXK4"/>
<dbReference type="FunCoup" id="Q6CXK4">
    <property type="interactions" value="58"/>
</dbReference>
<dbReference type="STRING" id="284590.Q6CXK4"/>
<dbReference type="PaxDb" id="284590-Q6CXK4"/>
<dbReference type="KEGG" id="kla:KLLA0_A07535g"/>
<dbReference type="eggNOG" id="ENOG502S30T">
    <property type="taxonomic scope" value="Eukaryota"/>
</dbReference>
<dbReference type="HOGENOM" id="CLU_087349_0_0_1"/>
<dbReference type="InParanoid" id="Q6CXK4"/>
<dbReference type="OMA" id="CITHFPN"/>
<dbReference type="Proteomes" id="UP000000598">
    <property type="component" value="Chromosome A"/>
</dbReference>
<dbReference type="GO" id="GO:0005789">
    <property type="term" value="C:endoplasmic reticulum membrane"/>
    <property type="evidence" value="ECO:0007669"/>
    <property type="project" value="UniProtKB-SubCell"/>
</dbReference>
<dbReference type="GO" id="GO:0031211">
    <property type="term" value="C:endoplasmic reticulum palmitoyltransferase complex"/>
    <property type="evidence" value="ECO:0007669"/>
    <property type="project" value="TreeGrafter"/>
</dbReference>
<dbReference type="GO" id="GO:0006612">
    <property type="term" value="P:protein targeting to membrane"/>
    <property type="evidence" value="ECO:0007669"/>
    <property type="project" value="TreeGrafter"/>
</dbReference>
<dbReference type="InterPro" id="IPR019383">
    <property type="entry name" value="Golgin_A_7/ERF4"/>
</dbReference>
<dbReference type="InterPro" id="IPR051371">
    <property type="entry name" value="Ras_palmitoyltransferase"/>
</dbReference>
<dbReference type="PANTHER" id="PTHR13254">
    <property type="entry name" value="GOLGI AUTOANTIGEN, GOLGIN SUBFAMILY A, 7"/>
    <property type="match status" value="1"/>
</dbReference>
<dbReference type="PANTHER" id="PTHR13254:SF0">
    <property type="entry name" value="GOLGIN SUBFAMILY A MEMBER 7_ERF4 DOMAIN-CONTAINING PROTEIN"/>
    <property type="match status" value="1"/>
</dbReference>
<dbReference type="Pfam" id="PF10256">
    <property type="entry name" value="Erf4"/>
    <property type="match status" value="1"/>
</dbReference>
<evidence type="ECO:0000250" key="1">
    <source>
        <dbReference type="UniProtKB" id="P41912"/>
    </source>
</evidence>
<evidence type="ECO:0000305" key="2"/>
<sequence length="258" mass="29308">MVSLVLADTADSSDLSKAAITVEESTSAQQPKFFNYHEFVITKYRALDEESCEEHGPENPICITHFPNIYVPEESDEFRTTRVVRIPRRFESSTEFPNFSTQLPGSEPAALPDTHNKEFVPAGEFEGQWYGETSVSPLSNYLDQAEWTEIVTRINSLLEAAYNPITRRNFVNVILDLLTLNLWSIIEPYLFVNPLQSVEDYVSEINRSESFRLKGIKIIPPRESSYLSVCIDSPAWIKPCTAINEPLLTHCDTLIVLL</sequence>